<sequence>MDVADAQIGQLRVKDDVGIRTQKLFQDFLEEFKENGEIKYTRPAANLESPDRCTLEVSFEDVEKYDQNLATAIIEEYYHVYPFLCQSVSNYVKDRIGLKTNKDCYVAFTEVPTRHKVRDLTTSKIGTLIRISGQVVRTHPVHPELVSGTFMCLDCQTEIRNVEQQFKFTNPTICRNPVCSNRRRFMLDVEKSLFLDFQKIRIQETQAELPRGCIPRAVEIILRSELVETVQAGDRYDFTGTLIVVPDVSVLAMPGTRAESGSRHKPGEGMEGVTGLKALGMRELNYRMAFLACSVQATTARFGGTDLPMSEVTAEDMKKQMTDAEWHKIYEMSKDRNLYQNLITCLFPSIYGNDEVKRGILLQLFGGVAKTTIEKTSLRGDVNVCIVGDPSTAKSQFLKQVSDFSPRAIYTSGKASSAAGLTAAVVRDEESFDFVIEAGALMLADNGICCIDEFDKMDLRDQVAIHEAMEQQTISIARAGVRATLNARTSILAAANPINGRYDRSKSLQQNIQLSAPIMSRFDLFFILVDECNEVVDYAIARKIVDLHSNIEESVERAYSREEVLRYVTFARQFKPIIGQEAGKMLVENYGHLRQRDTGTAGRSTWRITVRQLESMIRLSEAMAKLECSNRVLERHVKEAFRLLNKSIIRVEQPDIHLDDDDDLDVDDGIQDDIDMENNGSAANTETDTLDTSGASTVQKKKFTLSFEDYKNLSTMLVLHMRGEEARCEVEGSDSGMKRSDVVTWYLEQVADQIESEDELISRKNLIEKLIDRLIYHDQVIIPLKTSNLSRIKGPAEEQVDNDPLLVVHPNYVVD</sequence>
<dbReference type="EC" id="3.6.4.12" evidence="2"/>
<dbReference type="EMBL" id="CH379063">
    <property type="protein sequence ID" value="EAL32312.1"/>
    <property type="status" value="ALT_SEQ"/>
    <property type="molecule type" value="Genomic_DNA"/>
</dbReference>
<dbReference type="RefSeq" id="XP_001355255.1">
    <property type="nucleotide sequence ID" value="XM_001355219.3"/>
</dbReference>
<dbReference type="SMR" id="Q29JI9"/>
<dbReference type="FunCoup" id="Q29JI9">
    <property type="interactions" value="1529"/>
</dbReference>
<dbReference type="STRING" id="46245.Q29JI9"/>
<dbReference type="EnsemblMetazoa" id="FBtr0274750">
    <property type="protein sequence ID" value="FBpp0273188"/>
    <property type="gene ID" value="FBgn0077913"/>
</dbReference>
<dbReference type="GeneID" id="4816084"/>
<dbReference type="KEGG" id="dpo:4816084"/>
<dbReference type="CTD" id="4175"/>
<dbReference type="eggNOG" id="KOG0480">
    <property type="taxonomic scope" value="Eukaryota"/>
</dbReference>
<dbReference type="HOGENOM" id="CLU_000995_3_2_1"/>
<dbReference type="InParanoid" id="Q29JI9"/>
<dbReference type="OMA" id="RHQQTDK"/>
<dbReference type="PhylomeDB" id="Q29JI9"/>
<dbReference type="Proteomes" id="UP000001819">
    <property type="component" value="Chromosome X"/>
</dbReference>
<dbReference type="Bgee" id="FBgn0077913">
    <property type="expression patterns" value="Expressed in female reproductive system and 2 other cell types or tissues"/>
</dbReference>
<dbReference type="GO" id="GO:0042555">
    <property type="term" value="C:MCM complex"/>
    <property type="evidence" value="ECO:0000250"/>
    <property type="project" value="UniProtKB"/>
</dbReference>
<dbReference type="GO" id="GO:0005634">
    <property type="term" value="C:nucleus"/>
    <property type="evidence" value="ECO:0000250"/>
    <property type="project" value="UniProtKB"/>
</dbReference>
<dbReference type="GO" id="GO:0005524">
    <property type="term" value="F:ATP binding"/>
    <property type="evidence" value="ECO:0007669"/>
    <property type="project" value="UniProtKB-KW"/>
</dbReference>
<dbReference type="GO" id="GO:0016887">
    <property type="term" value="F:ATP hydrolysis activity"/>
    <property type="evidence" value="ECO:0007669"/>
    <property type="project" value="RHEA"/>
</dbReference>
<dbReference type="GO" id="GO:1990518">
    <property type="term" value="F:single-stranded 3'-5' DNA helicase activity"/>
    <property type="evidence" value="ECO:0007669"/>
    <property type="project" value="TreeGrafter"/>
</dbReference>
<dbReference type="GO" id="GO:0003697">
    <property type="term" value="F:single-stranded DNA binding"/>
    <property type="evidence" value="ECO:0007669"/>
    <property type="project" value="TreeGrafter"/>
</dbReference>
<dbReference type="GO" id="GO:0008270">
    <property type="term" value="F:zinc ion binding"/>
    <property type="evidence" value="ECO:0007669"/>
    <property type="project" value="UniProtKB-KW"/>
</dbReference>
<dbReference type="GO" id="GO:0051301">
    <property type="term" value="P:cell division"/>
    <property type="evidence" value="ECO:0007669"/>
    <property type="project" value="UniProtKB-KW"/>
</dbReference>
<dbReference type="GO" id="GO:0006260">
    <property type="term" value="P:DNA replication"/>
    <property type="evidence" value="ECO:0000250"/>
    <property type="project" value="UniProtKB"/>
</dbReference>
<dbReference type="GO" id="GO:0006270">
    <property type="term" value="P:DNA replication initiation"/>
    <property type="evidence" value="ECO:0007669"/>
    <property type="project" value="InterPro"/>
</dbReference>
<dbReference type="GO" id="GO:0000727">
    <property type="term" value="P:double-strand break repair via break-induced replication"/>
    <property type="evidence" value="ECO:0007669"/>
    <property type="project" value="TreeGrafter"/>
</dbReference>
<dbReference type="GO" id="GO:1902969">
    <property type="term" value="P:mitotic DNA replication"/>
    <property type="evidence" value="ECO:0007669"/>
    <property type="project" value="TreeGrafter"/>
</dbReference>
<dbReference type="CDD" id="cd17757">
    <property type="entry name" value="MCM6"/>
    <property type="match status" value="1"/>
</dbReference>
<dbReference type="FunFam" id="1.20.58.870:FF:000001">
    <property type="entry name" value="DNA helicase"/>
    <property type="match status" value="1"/>
</dbReference>
<dbReference type="FunFam" id="2.20.28.10:FF:000003">
    <property type="entry name" value="DNA helicase"/>
    <property type="match status" value="1"/>
</dbReference>
<dbReference type="FunFam" id="2.40.50.140:FF:000091">
    <property type="entry name" value="DNA helicase"/>
    <property type="match status" value="1"/>
</dbReference>
<dbReference type="FunFam" id="3.30.1640.10:FF:000004">
    <property type="entry name" value="DNA helicase"/>
    <property type="match status" value="1"/>
</dbReference>
<dbReference type="FunFam" id="3.40.50.300:FF:000115">
    <property type="entry name" value="DNA helicase"/>
    <property type="match status" value="1"/>
</dbReference>
<dbReference type="Gene3D" id="1.20.58.870">
    <property type="match status" value="1"/>
</dbReference>
<dbReference type="Gene3D" id="2.20.28.10">
    <property type="match status" value="1"/>
</dbReference>
<dbReference type="Gene3D" id="3.30.1640.10">
    <property type="entry name" value="mini-chromosome maintenance (MCM) complex, chain A, domain 1"/>
    <property type="match status" value="1"/>
</dbReference>
<dbReference type="Gene3D" id="2.40.50.140">
    <property type="entry name" value="Nucleic acid-binding proteins"/>
    <property type="match status" value="1"/>
</dbReference>
<dbReference type="Gene3D" id="3.40.50.300">
    <property type="entry name" value="P-loop containing nucleotide triphosphate hydrolases"/>
    <property type="match status" value="1"/>
</dbReference>
<dbReference type="InterPro" id="IPR031327">
    <property type="entry name" value="MCM"/>
</dbReference>
<dbReference type="InterPro" id="IPR008049">
    <property type="entry name" value="MCM6"/>
</dbReference>
<dbReference type="InterPro" id="IPR041024">
    <property type="entry name" value="Mcm6_C"/>
</dbReference>
<dbReference type="InterPro" id="IPR018525">
    <property type="entry name" value="MCM_CS"/>
</dbReference>
<dbReference type="InterPro" id="IPR001208">
    <property type="entry name" value="MCM_dom"/>
</dbReference>
<dbReference type="InterPro" id="IPR041562">
    <property type="entry name" value="MCM_lid"/>
</dbReference>
<dbReference type="InterPro" id="IPR027925">
    <property type="entry name" value="MCM_N"/>
</dbReference>
<dbReference type="InterPro" id="IPR033762">
    <property type="entry name" value="MCM_OB"/>
</dbReference>
<dbReference type="InterPro" id="IPR012340">
    <property type="entry name" value="NA-bd_OB-fold"/>
</dbReference>
<dbReference type="InterPro" id="IPR027417">
    <property type="entry name" value="P-loop_NTPase"/>
</dbReference>
<dbReference type="PANTHER" id="PTHR11630">
    <property type="entry name" value="DNA REPLICATION LICENSING FACTOR MCM FAMILY MEMBER"/>
    <property type="match status" value="1"/>
</dbReference>
<dbReference type="PANTHER" id="PTHR11630:SF43">
    <property type="entry name" value="DNA REPLICATION LICENSING FACTOR MCM6"/>
    <property type="match status" value="1"/>
</dbReference>
<dbReference type="Pfam" id="PF00493">
    <property type="entry name" value="MCM"/>
    <property type="match status" value="1"/>
</dbReference>
<dbReference type="Pfam" id="PF18263">
    <property type="entry name" value="MCM6_C"/>
    <property type="match status" value="1"/>
</dbReference>
<dbReference type="Pfam" id="PF17855">
    <property type="entry name" value="MCM_lid"/>
    <property type="match status" value="1"/>
</dbReference>
<dbReference type="Pfam" id="PF14551">
    <property type="entry name" value="MCM_N"/>
    <property type="match status" value="1"/>
</dbReference>
<dbReference type="Pfam" id="PF17207">
    <property type="entry name" value="MCM_OB"/>
    <property type="match status" value="1"/>
</dbReference>
<dbReference type="PRINTS" id="PR01657">
    <property type="entry name" value="MCMFAMILY"/>
</dbReference>
<dbReference type="PRINTS" id="PR01662">
    <property type="entry name" value="MCMPROTEIN6"/>
</dbReference>
<dbReference type="SMART" id="SM00350">
    <property type="entry name" value="MCM"/>
    <property type="match status" value="1"/>
</dbReference>
<dbReference type="SUPFAM" id="SSF50249">
    <property type="entry name" value="Nucleic acid-binding proteins"/>
    <property type="match status" value="1"/>
</dbReference>
<dbReference type="SUPFAM" id="SSF52540">
    <property type="entry name" value="P-loop containing nucleoside triphosphate hydrolases"/>
    <property type="match status" value="1"/>
</dbReference>
<dbReference type="PROSITE" id="PS00847">
    <property type="entry name" value="MCM_1"/>
    <property type="match status" value="1"/>
</dbReference>
<dbReference type="PROSITE" id="PS50051">
    <property type="entry name" value="MCM_2"/>
    <property type="match status" value="1"/>
</dbReference>
<reference evidence="7" key="1">
    <citation type="journal article" date="2005" name="Genome Res.">
        <title>Comparative genome sequencing of Drosophila pseudoobscura: chromosomal, gene, and cis-element evolution.</title>
        <authorList>
            <person name="Richards S."/>
            <person name="Liu Y."/>
            <person name="Bettencourt B.R."/>
            <person name="Hradecky P."/>
            <person name="Letovsky S."/>
            <person name="Nielsen R."/>
            <person name="Thornton K."/>
            <person name="Hubisz M.J."/>
            <person name="Chen R."/>
            <person name="Meisel R.P."/>
            <person name="Couronne O."/>
            <person name="Hua S."/>
            <person name="Smith M.A."/>
            <person name="Zhang P."/>
            <person name="Liu J."/>
            <person name="Bussemaker H.J."/>
            <person name="van Batenburg M.F."/>
            <person name="Howells S.L."/>
            <person name="Scherer S.E."/>
            <person name="Sodergren E."/>
            <person name="Matthews B.B."/>
            <person name="Crosby M.A."/>
            <person name="Schroeder A.J."/>
            <person name="Ortiz-Barrientos D."/>
            <person name="Rives C.M."/>
            <person name="Metzker M.L."/>
            <person name="Muzny D.M."/>
            <person name="Scott G."/>
            <person name="Steffen D."/>
            <person name="Wheeler D.A."/>
            <person name="Worley K.C."/>
            <person name="Havlak P."/>
            <person name="Durbin K.J."/>
            <person name="Egan A."/>
            <person name="Gill R."/>
            <person name="Hume J."/>
            <person name="Morgan M.B."/>
            <person name="Miner G."/>
            <person name="Hamilton C."/>
            <person name="Huang Y."/>
            <person name="Waldron L."/>
            <person name="Verduzco D."/>
            <person name="Clerc-Blankenburg K.P."/>
            <person name="Dubchak I."/>
            <person name="Noor M.A.F."/>
            <person name="Anderson W."/>
            <person name="White K.P."/>
            <person name="Clark A.G."/>
            <person name="Schaeffer S.W."/>
            <person name="Gelbart W.M."/>
            <person name="Weinstock G.M."/>
            <person name="Gibbs R.A."/>
        </authorList>
    </citation>
    <scope>NUCLEOTIDE SEQUENCE [LARGE SCALE GENOMIC DNA]</scope>
    <source>
        <strain>MV2-25 / Tucson 14011-0121.94</strain>
    </source>
</reference>
<gene>
    <name type="primary">Mcm6</name>
    <name type="ORF">GA17904</name>
</gene>
<organism>
    <name type="scientific">Drosophila pseudoobscura pseudoobscura</name>
    <name type="common">Fruit fly</name>
    <dbReference type="NCBI Taxonomy" id="46245"/>
    <lineage>
        <taxon>Eukaryota</taxon>
        <taxon>Metazoa</taxon>
        <taxon>Ecdysozoa</taxon>
        <taxon>Arthropoda</taxon>
        <taxon>Hexapoda</taxon>
        <taxon>Insecta</taxon>
        <taxon>Pterygota</taxon>
        <taxon>Neoptera</taxon>
        <taxon>Endopterygota</taxon>
        <taxon>Diptera</taxon>
        <taxon>Brachycera</taxon>
        <taxon>Muscomorpha</taxon>
        <taxon>Ephydroidea</taxon>
        <taxon>Drosophilidae</taxon>
        <taxon>Drosophila</taxon>
        <taxon>Sophophora</taxon>
    </lineage>
</organism>
<protein>
    <recommendedName>
        <fullName>DNA replication licensing factor Mcm6</fullName>
        <ecNumber evidence="2">3.6.4.12</ecNumber>
    </recommendedName>
</protein>
<accession>Q29JI9</accession>
<name>MCM6_DROPS</name>
<evidence type="ECO:0000250" key="1"/>
<evidence type="ECO:0000250" key="2">
    <source>
        <dbReference type="UniProtKB" id="P97311"/>
    </source>
</evidence>
<evidence type="ECO:0000250" key="3">
    <source>
        <dbReference type="UniProtKB" id="Q14566"/>
    </source>
</evidence>
<evidence type="ECO:0000255" key="4"/>
<evidence type="ECO:0000256" key="5">
    <source>
        <dbReference type="SAM" id="MobiDB-lite"/>
    </source>
</evidence>
<evidence type="ECO:0000305" key="6"/>
<evidence type="ECO:0000312" key="7">
    <source>
        <dbReference type="EMBL" id="EAL32312.1"/>
    </source>
</evidence>
<keyword id="KW-0067">ATP-binding</keyword>
<keyword id="KW-0131">Cell cycle</keyword>
<keyword id="KW-0132">Cell division</keyword>
<keyword id="KW-0235">DNA replication</keyword>
<keyword id="KW-0238">DNA-binding</keyword>
<keyword id="KW-0347">Helicase</keyword>
<keyword id="KW-0378">Hydrolase</keyword>
<keyword id="KW-0479">Metal-binding</keyword>
<keyword id="KW-0498">Mitosis</keyword>
<keyword id="KW-0547">Nucleotide-binding</keyword>
<keyword id="KW-0539">Nucleus</keyword>
<keyword id="KW-1185">Reference proteome</keyword>
<keyword id="KW-0862">Zinc</keyword>
<keyword id="KW-0863">Zinc-finger</keyword>
<comment type="function">
    <text evidence="1">Acts as a component of the Mcm2-7 complex (Mcm complex) which is the putative replicative helicase essential for 'once per cell cycle' DNA replication initiation and elongation in eukaryotic cells. Core component of CDC45-MCM-GINS (CMG) helicase, the molecular machine that unwinds template DNA during replication, and around which the replisome is built. The active ATPase sites in the Mcm2-7 ring are formed through the interaction surfaces of two neighboring subunits such that a critical structure of a conserved arginine finger motif is provided in trans relative to the ATP-binding site of the Walker A box of the adjacent subunit. The six ATPase active sites, however, are likely to contribute differentially to the complex helicase activity Required for DNA replication and cell proliferation. Required for mitotic cycles, endocycles, and the special S phase associated with the amplification of chorion genes; has a role in origin unwinding or fork elongation at chorion loci (By similarity).</text>
</comment>
<comment type="function">
    <text evidence="3">Acts as a component of the MCM2-7 complex (MCM complex) which is the replicative helicase essential for 'once per cell cycle' DNA replication initiation and elongation in eukaryotic cells. Core component of CDC45-MCM-GINS (CMG) helicase, the molecular machine that unwinds template DNA during replication, and around which the replisome is built. The active ATPase sites in the MCM2-7 ring are formed through the interaction surfaces of two neighboring subunits such that a critical structure of a conserved arginine finger motif is provided in trans relative to the ATP-binding site of the Walker A box of the adjacent subunit. The six ATPase active sites, however, are likely to contribute differentially to the complex helicase activity.</text>
</comment>
<comment type="catalytic activity">
    <reaction evidence="2">
        <text>ATP + H2O = ADP + phosphate + H(+)</text>
        <dbReference type="Rhea" id="RHEA:13065"/>
        <dbReference type="ChEBI" id="CHEBI:15377"/>
        <dbReference type="ChEBI" id="CHEBI:15378"/>
        <dbReference type="ChEBI" id="CHEBI:30616"/>
        <dbReference type="ChEBI" id="CHEBI:43474"/>
        <dbReference type="ChEBI" id="CHEBI:456216"/>
        <dbReference type="EC" id="3.6.4.12"/>
    </reaction>
    <physiologicalReaction direction="left-to-right" evidence="2">
        <dbReference type="Rhea" id="RHEA:13066"/>
    </physiologicalReaction>
</comment>
<comment type="subunit">
    <text evidence="1">Component of the Mcm2-7 complex. The complex forms a toroidal hexameric ring with the proposed subunit order Mcm2-Mcm6-Mcm4-Mcm7-Mcm3-Mcm5. The heterodimers of mcm4/mcm6 and mcm3/mcm5 interact with mcm2 and mcm7 (By similarity).</text>
</comment>
<comment type="subcellular location">
    <subcellularLocation>
        <location evidence="1">Nucleus</location>
    </subcellularLocation>
    <text evidence="1">Associated with chromatin during cell cycles.</text>
</comment>
<comment type="miscellaneous">
    <text evidence="2">Early fractionation of eukaryotic MCM proteins yielded a variety of dimeric, trimeric and tetrameric complexes with unclear biological significance. Specifically a MCM467 subcomplex is shown to have in vitro helicase activity which is inhibited by the MCM2 subunit. The MCM2-7 hexamer is the proposed physiological active complex.</text>
</comment>
<comment type="similarity">
    <text evidence="4">Belongs to the MCM family.</text>
</comment>
<comment type="sequence caution" evidence="6">
    <conflict type="erroneous gene model prediction">
        <sequence resource="EMBL-CDS" id="EAL32312"/>
    </conflict>
</comment>
<feature type="chain" id="PRO_0000233316" description="DNA replication licensing factor Mcm6">
    <location>
        <begin position="1"/>
        <end position="815"/>
    </location>
</feature>
<feature type="domain" description="MCM" evidence="4">
    <location>
        <begin position="338"/>
        <end position="544"/>
    </location>
</feature>
<feature type="zinc finger region" description="C4-type" evidence="4">
    <location>
        <begin position="152"/>
        <end position="179"/>
    </location>
</feature>
<feature type="region of interest" description="Disordered" evidence="5">
    <location>
        <begin position="672"/>
        <end position="693"/>
    </location>
</feature>
<feature type="short sequence motif" description="Arginine finger">
    <location>
        <begin position="520"/>
        <end position="523"/>
    </location>
</feature>
<feature type="compositionally biased region" description="Polar residues" evidence="5">
    <location>
        <begin position="678"/>
        <end position="693"/>
    </location>
</feature>
<feature type="binding site" evidence="3">
    <location>
        <position position="391"/>
    </location>
    <ligand>
        <name>ATP</name>
        <dbReference type="ChEBI" id="CHEBI:30616"/>
        <note>ligand shared with MCM4</note>
    </ligand>
</feature>
<feature type="binding site" evidence="3">
    <location>
        <position position="392"/>
    </location>
    <ligand>
        <name>ATP</name>
        <dbReference type="ChEBI" id="CHEBI:30616"/>
        <note>ligand shared with MCM4</note>
    </ligand>
</feature>
<feature type="binding site" evidence="3">
    <location>
        <position position="393"/>
    </location>
    <ligand>
        <name>ATP</name>
        <dbReference type="ChEBI" id="CHEBI:30616"/>
        <note>ligand shared with MCM4</note>
    </ligand>
</feature>
<feature type="binding site" evidence="3">
    <location>
        <position position="394"/>
    </location>
    <ligand>
        <name>ATP</name>
        <dbReference type="ChEBI" id="CHEBI:30616"/>
        <note>ligand shared with MCM4</note>
    </ligand>
</feature>
<feature type="binding site" evidence="3">
    <location>
        <position position="395"/>
    </location>
    <ligand>
        <name>ATP</name>
        <dbReference type="ChEBI" id="CHEBI:30616"/>
        <note>ligand shared with MCM4</note>
    </ligand>
</feature>
<feature type="binding site" evidence="3">
    <location>
        <position position="496"/>
    </location>
    <ligand>
        <name>ATP</name>
        <dbReference type="ChEBI" id="CHEBI:30616"/>
        <note>ligand shared with MCM4</note>
    </ligand>
</feature>
<feature type="binding site" evidence="3">
    <location>
        <position position="611"/>
    </location>
    <ligand>
        <name>ADP</name>
        <dbReference type="ChEBI" id="CHEBI:456216"/>
        <note>ligand shared with MCM2</note>
    </ligand>
</feature>
<feature type="binding site" evidence="3">
    <location>
        <position position="614"/>
    </location>
    <ligand>
        <name>ADP</name>
        <dbReference type="ChEBI" id="CHEBI:456216"/>
        <note>ligand shared with MCM2</note>
    </ligand>
</feature>
<proteinExistence type="inferred from homology"/>